<accession>A4SY42</accession>
<sequence>MSIDLNEITALMQLASPALPIGGYSYSQGLEAAIDSGIVKDASTAEAWIKDVFLGVFARSEAPLWLLSYKAWAKNDVDSVHNLNDYFLASRETSELRSETEQMGWSLLQIAQSLGWGGECLTQLSAIKPLSLLTAHSYASFYLNIQAKNGLAAYAFSWIENQVAASLKAIPLGQVAGQQALTKIRLLVPEMVHEAEQRANSGLSMVDNFSPMLAILSSRHETQYSRLFRS</sequence>
<feature type="chain" id="PRO_0000344144" description="Urease accessory protein UreF">
    <location>
        <begin position="1"/>
        <end position="230"/>
    </location>
</feature>
<protein>
    <recommendedName>
        <fullName evidence="1">Urease accessory protein UreF</fullName>
    </recommendedName>
</protein>
<evidence type="ECO:0000255" key="1">
    <source>
        <dbReference type="HAMAP-Rule" id="MF_01385"/>
    </source>
</evidence>
<gene>
    <name evidence="1" type="primary">ureF</name>
    <name type="ordered locus">Pnuc_1191</name>
</gene>
<dbReference type="EMBL" id="CP000655">
    <property type="protein sequence ID" value="ABP34406.1"/>
    <property type="molecule type" value="Genomic_DNA"/>
</dbReference>
<dbReference type="RefSeq" id="WP_011903031.1">
    <property type="nucleotide sequence ID" value="NC_009379.1"/>
</dbReference>
<dbReference type="SMR" id="A4SY42"/>
<dbReference type="GeneID" id="31481577"/>
<dbReference type="KEGG" id="pnu:Pnuc_1191"/>
<dbReference type="eggNOG" id="COG0830">
    <property type="taxonomic scope" value="Bacteria"/>
</dbReference>
<dbReference type="HOGENOM" id="CLU_049215_2_1_4"/>
<dbReference type="Proteomes" id="UP000000231">
    <property type="component" value="Chromosome"/>
</dbReference>
<dbReference type="GO" id="GO:0005737">
    <property type="term" value="C:cytoplasm"/>
    <property type="evidence" value="ECO:0007669"/>
    <property type="project" value="UniProtKB-SubCell"/>
</dbReference>
<dbReference type="GO" id="GO:0016151">
    <property type="term" value="F:nickel cation binding"/>
    <property type="evidence" value="ECO:0007669"/>
    <property type="project" value="UniProtKB-UniRule"/>
</dbReference>
<dbReference type="Gene3D" id="1.10.4190.10">
    <property type="entry name" value="Urease accessory protein UreF"/>
    <property type="match status" value="1"/>
</dbReference>
<dbReference type="HAMAP" id="MF_01385">
    <property type="entry name" value="UreF"/>
    <property type="match status" value="1"/>
</dbReference>
<dbReference type="InterPro" id="IPR002639">
    <property type="entry name" value="UreF"/>
</dbReference>
<dbReference type="InterPro" id="IPR038277">
    <property type="entry name" value="UreF_sf"/>
</dbReference>
<dbReference type="PANTHER" id="PTHR33620">
    <property type="entry name" value="UREASE ACCESSORY PROTEIN F"/>
    <property type="match status" value="1"/>
</dbReference>
<dbReference type="PANTHER" id="PTHR33620:SF1">
    <property type="entry name" value="UREASE ACCESSORY PROTEIN F"/>
    <property type="match status" value="1"/>
</dbReference>
<dbReference type="Pfam" id="PF01730">
    <property type="entry name" value="UreF"/>
    <property type="match status" value="1"/>
</dbReference>
<dbReference type="PIRSF" id="PIRSF009467">
    <property type="entry name" value="Ureas_acces_UreF"/>
    <property type="match status" value="1"/>
</dbReference>
<keyword id="KW-0143">Chaperone</keyword>
<keyword id="KW-0963">Cytoplasm</keyword>
<keyword id="KW-0996">Nickel insertion</keyword>
<keyword id="KW-1185">Reference proteome</keyword>
<proteinExistence type="inferred from homology"/>
<comment type="function">
    <text evidence="1">Required for maturation of urease via the functional incorporation of the urease nickel metallocenter.</text>
</comment>
<comment type="subunit">
    <text evidence="1">UreD, UreF and UreG form a complex that acts as a GTP-hydrolysis-dependent molecular chaperone, activating the urease apoprotein by helping to assemble the nickel containing metallocenter of UreC. The UreE protein probably delivers the nickel.</text>
</comment>
<comment type="subcellular location">
    <subcellularLocation>
        <location evidence="1">Cytoplasm</location>
    </subcellularLocation>
</comment>
<comment type="similarity">
    <text evidence="1">Belongs to the UreF family.</text>
</comment>
<name>UREF_POLAQ</name>
<organism>
    <name type="scientific">Polynucleobacter asymbioticus (strain DSM 18221 / CIP 109841 / QLW-P1DMWA-1)</name>
    <name type="common">Polynucleobacter necessarius subsp. asymbioticus</name>
    <dbReference type="NCBI Taxonomy" id="312153"/>
    <lineage>
        <taxon>Bacteria</taxon>
        <taxon>Pseudomonadati</taxon>
        <taxon>Pseudomonadota</taxon>
        <taxon>Betaproteobacteria</taxon>
        <taxon>Burkholderiales</taxon>
        <taxon>Burkholderiaceae</taxon>
        <taxon>Polynucleobacter</taxon>
    </lineage>
</organism>
<reference key="1">
    <citation type="journal article" date="2012" name="Stand. Genomic Sci.">
        <title>Complete genome sequence of Polynucleobacter necessarius subsp. asymbioticus type strain (QLW-P1DMWA-1(T)).</title>
        <authorList>
            <person name="Meincke L."/>
            <person name="Copeland A."/>
            <person name="Lapidus A."/>
            <person name="Lucas S."/>
            <person name="Berry K.W."/>
            <person name="Del Rio T.G."/>
            <person name="Hammon N."/>
            <person name="Dalin E."/>
            <person name="Tice H."/>
            <person name="Pitluck S."/>
            <person name="Richardson P."/>
            <person name="Bruce D."/>
            <person name="Goodwin L."/>
            <person name="Han C."/>
            <person name="Tapia R."/>
            <person name="Detter J.C."/>
            <person name="Schmutz J."/>
            <person name="Brettin T."/>
            <person name="Larimer F."/>
            <person name="Land M."/>
            <person name="Hauser L."/>
            <person name="Kyrpides N.C."/>
            <person name="Ivanova N."/>
            <person name="Goker M."/>
            <person name="Woyke T."/>
            <person name="Wu Q.L."/>
            <person name="Pockl M."/>
            <person name="Hahn M.W."/>
            <person name="Klenk H.P."/>
        </authorList>
    </citation>
    <scope>NUCLEOTIDE SEQUENCE [LARGE SCALE GENOMIC DNA]</scope>
    <source>
        <strain>DSM 18221 / CIP 109841 / QLW-P1DMWA-1</strain>
    </source>
</reference>